<evidence type="ECO:0000255" key="1">
    <source>
        <dbReference type="HAMAP-Rule" id="MF_00459"/>
    </source>
</evidence>
<reference key="1">
    <citation type="submission" date="2008-02" db="EMBL/GenBank/DDBJ databases">
        <title>Complete sequence of Yersinia pseudotuberculosis YPIII.</title>
        <authorList>
            <consortium name="US DOE Joint Genome Institute"/>
            <person name="Copeland A."/>
            <person name="Lucas S."/>
            <person name="Lapidus A."/>
            <person name="Glavina del Rio T."/>
            <person name="Dalin E."/>
            <person name="Tice H."/>
            <person name="Bruce D."/>
            <person name="Goodwin L."/>
            <person name="Pitluck S."/>
            <person name="Munk A.C."/>
            <person name="Brettin T."/>
            <person name="Detter J.C."/>
            <person name="Han C."/>
            <person name="Tapia R."/>
            <person name="Schmutz J."/>
            <person name="Larimer F."/>
            <person name="Land M."/>
            <person name="Hauser L."/>
            <person name="Challacombe J.F."/>
            <person name="Green L."/>
            <person name="Lindler L.E."/>
            <person name="Nikolich M.P."/>
            <person name="Richardson P."/>
        </authorList>
    </citation>
    <scope>NUCLEOTIDE SEQUENCE [LARGE SCALE GENOMIC DNA]</scope>
    <source>
        <strain>YPIII</strain>
    </source>
</reference>
<dbReference type="EC" id="7.-.-.-" evidence="1"/>
<dbReference type="EMBL" id="CP000950">
    <property type="protein sequence ID" value="ACA68293.1"/>
    <property type="molecule type" value="Genomic_DNA"/>
</dbReference>
<dbReference type="SMR" id="B1JKN2"/>
<dbReference type="KEGG" id="ypy:YPK_2006"/>
<dbReference type="PATRIC" id="fig|502800.11.peg.2683"/>
<dbReference type="GO" id="GO:0005886">
    <property type="term" value="C:plasma membrane"/>
    <property type="evidence" value="ECO:0007669"/>
    <property type="project" value="UniProtKB-SubCell"/>
</dbReference>
<dbReference type="GO" id="GO:0022900">
    <property type="term" value="P:electron transport chain"/>
    <property type="evidence" value="ECO:0007669"/>
    <property type="project" value="UniProtKB-UniRule"/>
</dbReference>
<dbReference type="HAMAP" id="MF_00459">
    <property type="entry name" value="RsxA_RnfA"/>
    <property type="match status" value="1"/>
</dbReference>
<dbReference type="InterPro" id="IPR011293">
    <property type="entry name" value="Ion_transpt_RnfA/RsxA"/>
</dbReference>
<dbReference type="InterPro" id="IPR003667">
    <property type="entry name" value="NqrDE/RnfAE"/>
</dbReference>
<dbReference type="InterPro" id="IPR050133">
    <property type="entry name" value="NqrDE/RnfAE_oxidrdctase"/>
</dbReference>
<dbReference type="NCBIfam" id="NF003481">
    <property type="entry name" value="PRK05151.1"/>
    <property type="match status" value="1"/>
</dbReference>
<dbReference type="NCBIfam" id="TIGR01943">
    <property type="entry name" value="rnfA"/>
    <property type="match status" value="1"/>
</dbReference>
<dbReference type="PANTHER" id="PTHR30335">
    <property type="entry name" value="INTEGRAL MEMBRANE PROTEIN OF SOXR-REDUCING COMPLEX"/>
    <property type="match status" value="1"/>
</dbReference>
<dbReference type="PANTHER" id="PTHR30335:SF0">
    <property type="entry name" value="ION-TRANSLOCATING OXIDOREDUCTASE COMPLEX SUBUNIT A"/>
    <property type="match status" value="1"/>
</dbReference>
<dbReference type="Pfam" id="PF02508">
    <property type="entry name" value="Rnf-Nqr"/>
    <property type="match status" value="1"/>
</dbReference>
<dbReference type="PIRSF" id="PIRSF006102">
    <property type="entry name" value="NQR_DE"/>
    <property type="match status" value="1"/>
</dbReference>
<protein>
    <recommendedName>
        <fullName evidence="1">Ion-translocating oxidoreductase complex subunit A</fullName>
        <ecNumber evidence="1">7.-.-.-</ecNumber>
    </recommendedName>
    <alternativeName>
        <fullName evidence="1">Rnf electron transport complex subunit A</fullName>
    </alternativeName>
</protein>
<organism>
    <name type="scientific">Yersinia pseudotuberculosis serotype O:3 (strain YPIII)</name>
    <dbReference type="NCBI Taxonomy" id="502800"/>
    <lineage>
        <taxon>Bacteria</taxon>
        <taxon>Pseudomonadati</taxon>
        <taxon>Pseudomonadota</taxon>
        <taxon>Gammaproteobacteria</taxon>
        <taxon>Enterobacterales</taxon>
        <taxon>Yersiniaceae</taxon>
        <taxon>Yersinia</taxon>
    </lineage>
</organism>
<accession>B1JKN2</accession>
<proteinExistence type="inferred from homology"/>
<sequence length="193" mass="20782">MTEYLLLFVGTVLVNNFVLVKFLGLCPFMGVSKKLETAIGMGLATTFVLTLASVCAWMVNSFILLPLGLIYLRTLAFILVIAVVVQFTELVVRKTSPTLYRLLGIFLPLITTNCAVLGVALLNVNQSHNFMQSAVYGFSAAAGFSLVMVLFAAIRERLAVADVPAPFRGSSIALITAGLMSLAFMGFTGLVKF</sequence>
<keyword id="KW-0997">Cell inner membrane</keyword>
<keyword id="KW-1003">Cell membrane</keyword>
<keyword id="KW-0249">Electron transport</keyword>
<keyword id="KW-0472">Membrane</keyword>
<keyword id="KW-1278">Translocase</keyword>
<keyword id="KW-0812">Transmembrane</keyword>
<keyword id="KW-1133">Transmembrane helix</keyword>
<keyword id="KW-0813">Transport</keyword>
<name>RNFA_YERPY</name>
<gene>
    <name evidence="1" type="primary">rnfA</name>
    <name type="ordered locus">YPK_2006</name>
</gene>
<comment type="function">
    <text evidence="1">Part of a membrane-bound complex that couples electron transfer with translocation of ions across the membrane.</text>
</comment>
<comment type="subunit">
    <text evidence="1">The complex is composed of six subunits: RnfA, RnfB, RnfC, RnfD, RnfE and RnfG.</text>
</comment>
<comment type="subcellular location">
    <subcellularLocation>
        <location evidence="1">Cell inner membrane</location>
        <topology evidence="1">Multi-pass membrane protein</topology>
    </subcellularLocation>
</comment>
<comment type="similarity">
    <text evidence="1">Belongs to the NqrDE/RnfAE family.</text>
</comment>
<feature type="chain" id="PRO_1000191746" description="Ion-translocating oxidoreductase complex subunit A">
    <location>
        <begin position="1"/>
        <end position="193"/>
    </location>
</feature>
<feature type="transmembrane region" description="Helical" evidence="1">
    <location>
        <begin position="5"/>
        <end position="25"/>
    </location>
</feature>
<feature type="transmembrane region" description="Helical" evidence="1">
    <location>
        <begin position="39"/>
        <end position="59"/>
    </location>
</feature>
<feature type="transmembrane region" description="Helical" evidence="1">
    <location>
        <begin position="62"/>
        <end position="82"/>
    </location>
</feature>
<feature type="transmembrane region" description="Helical" evidence="1">
    <location>
        <begin position="102"/>
        <end position="122"/>
    </location>
</feature>
<feature type="transmembrane region" description="Helical" evidence="1">
    <location>
        <begin position="134"/>
        <end position="154"/>
    </location>
</feature>
<feature type="transmembrane region" description="Helical" evidence="1">
    <location>
        <begin position="171"/>
        <end position="191"/>
    </location>
</feature>